<feature type="chain" id="PRO_0000102052" description="ATP-dependent DNA helicase PcrA">
    <location>
        <begin position="1"/>
        <end position="749"/>
    </location>
</feature>
<feature type="domain" description="UvrD-like helicase ATP-binding" evidence="2">
    <location>
        <begin position="8"/>
        <end position="288"/>
    </location>
</feature>
<feature type="domain" description="UvrD-like helicase C-terminal" evidence="3">
    <location>
        <begin position="289"/>
        <end position="570"/>
    </location>
</feature>
<feature type="binding site" evidence="2">
    <location>
        <begin position="32"/>
        <end position="37"/>
    </location>
    <ligand>
        <name>ATP</name>
        <dbReference type="ChEBI" id="CHEBI:30616"/>
    </ligand>
</feature>
<feature type="binding site" evidence="1">
    <location>
        <position position="286"/>
    </location>
    <ligand>
        <name>ATP</name>
        <dbReference type="ChEBI" id="CHEBI:30616"/>
    </ligand>
</feature>
<sequence>MSVETLTNGMNNKQAEAVQTTEGPLLIMAGAGSGKTRVLTHRIAHLVQDLNVFPWRILAITFTNKAAREMRERIAALLSEDVARDIWVSTFHALAVRILRRDGEAIGLAKNFTIIDTSAQRTLMKRVINDLNLDTNQYDPRTILGMISNAKNDMLQPRDYAKAADNAFQETVAEVYTAYQAELKRSQSVDFDDLIMLTIDLFQSAPDVLARYQQQFEYLHVDEYQDTNDAQYTIVNLLAQRSKNLAVVGDADQSIYGWRGANMNNILNFEKDYPNAHTVMLEQNYRSTQNILDAANAVINHNNERVPKKLWTENGKGDQITYYRAQTEHDEANFILSNIQQLRETKHMAYSDFAVLYRTNAQSRNIEESLVKANMPYSMVGGHKFYERKEILDIMAYMSLITNPDDNAAFERVVNEPKRGLGATSLTRLRELANRLNVSYMKAIGSIELAPSITTKAASKFLTFAEMMHNLRQQSEFLNVTELTELVMTQSGYRQMLAEKNDPDSQARLENLEEFLSVTKEFDDKYQPEDPESIDPVTDFLGTTALMSDLDDFEEGDGAVTLMTLHAAKGLEFPVVFLIGLKEGIFPLSRAMMDEDLLEEERRLAYVGITRAMKKLFLTNAFSRLLYGRTQANEPSRFIAEISPELLETAYSGLSRDKTQKKTLPFDRKMQRATATTYQATPVTKITNGVTGGDQTSWSTGDKVSHKKWGVGTVISVSGRADDQELKVAFPSEGVKQLLAAFAPIQKVD</sequence>
<proteinExistence type="inferred from homology"/>
<name>PCRA_LEUCI</name>
<comment type="function">
    <text>Essential helicase.</text>
</comment>
<comment type="catalytic activity">
    <reaction>
        <text>Couples ATP hydrolysis with the unwinding of duplex DNA by translocating in the 3'-5' direction.</text>
        <dbReference type="EC" id="5.6.2.4"/>
    </reaction>
</comment>
<comment type="catalytic activity">
    <reaction>
        <text>ATP + H2O = ADP + phosphate + H(+)</text>
        <dbReference type="Rhea" id="RHEA:13065"/>
        <dbReference type="ChEBI" id="CHEBI:15377"/>
        <dbReference type="ChEBI" id="CHEBI:15378"/>
        <dbReference type="ChEBI" id="CHEBI:30616"/>
        <dbReference type="ChEBI" id="CHEBI:43474"/>
        <dbReference type="ChEBI" id="CHEBI:456216"/>
        <dbReference type="EC" id="5.6.2.4"/>
    </reaction>
</comment>
<comment type="similarity">
    <text evidence="4">Belongs to the helicase family. UvrD subfamily.</text>
</comment>
<keyword id="KW-0067">ATP-binding</keyword>
<keyword id="KW-0227">DNA damage</keyword>
<keyword id="KW-0234">DNA repair</keyword>
<keyword id="KW-0238">DNA-binding</keyword>
<keyword id="KW-0347">Helicase</keyword>
<keyword id="KW-0378">Hydrolase</keyword>
<keyword id="KW-0413">Isomerase</keyword>
<keyword id="KW-0547">Nucleotide-binding</keyword>
<evidence type="ECO:0000250" key="1"/>
<evidence type="ECO:0000255" key="2">
    <source>
        <dbReference type="PROSITE-ProRule" id="PRU00560"/>
    </source>
</evidence>
<evidence type="ECO:0000255" key="3">
    <source>
        <dbReference type="PROSITE-ProRule" id="PRU00617"/>
    </source>
</evidence>
<evidence type="ECO:0000305" key="4"/>
<accession>Q9S3Q0</accession>
<reference key="1">
    <citation type="submission" date="1999-08" db="EMBL/GenBank/DDBJ databases">
        <title>Cloning and sequencing of the DNA helicase gene of Leuconostoc citreum.</title>
        <authorList>
            <person name="Cibik R."/>
            <person name="Quiberoni A."/>
            <person name="Tailliez P."/>
        </authorList>
    </citation>
    <scope>NUCLEOTIDE SEQUENCE [GENOMIC DNA]</scope>
    <source>
        <strain>CNRZ 1478 / 22R</strain>
    </source>
</reference>
<organism>
    <name type="scientific">Leuconostoc citreum</name>
    <dbReference type="NCBI Taxonomy" id="33964"/>
    <lineage>
        <taxon>Bacteria</taxon>
        <taxon>Bacillati</taxon>
        <taxon>Bacillota</taxon>
        <taxon>Bacilli</taxon>
        <taxon>Lactobacillales</taxon>
        <taxon>Lactobacillaceae</taxon>
        <taxon>Leuconostoc</taxon>
    </lineage>
</organism>
<protein>
    <recommendedName>
        <fullName>ATP-dependent DNA helicase PcrA</fullName>
        <ecNumber>5.6.2.4</ecNumber>
    </recommendedName>
    <alternativeName>
        <fullName evidence="4">DNA 3'-5' helicase PcrA</fullName>
    </alternativeName>
</protein>
<dbReference type="EC" id="5.6.2.4"/>
<dbReference type="EMBL" id="AF176554">
    <property type="protein sequence ID" value="AAD51119.1"/>
    <property type="molecule type" value="Genomic_DNA"/>
</dbReference>
<dbReference type="PIR" id="T44796">
    <property type="entry name" value="T44796"/>
</dbReference>
<dbReference type="SMR" id="Q9S3Q0"/>
<dbReference type="GO" id="GO:0005829">
    <property type="term" value="C:cytosol"/>
    <property type="evidence" value="ECO:0007669"/>
    <property type="project" value="TreeGrafter"/>
</dbReference>
<dbReference type="GO" id="GO:0033202">
    <property type="term" value="C:DNA helicase complex"/>
    <property type="evidence" value="ECO:0007669"/>
    <property type="project" value="TreeGrafter"/>
</dbReference>
<dbReference type="GO" id="GO:0043138">
    <property type="term" value="F:3'-5' DNA helicase activity"/>
    <property type="evidence" value="ECO:0007669"/>
    <property type="project" value="TreeGrafter"/>
</dbReference>
<dbReference type="GO" id="GO:0005524">
    <property type="term" value="F:ATP binding"/>
    <property type="evidence" value="ECO:0007669"/>
    <property type="project" value="UniProtKB-KW"/>
</dbReference>
<dbReference type="GO" id="GO:0016887">
    <property type="term" value="F:ATP hydrolysis activity"/>
    <property type="evidence" value="ECO:0007669"/>
    <property type="project" value="RHEA"/>
</dbReference>
<dbReference type="GO" id="GO:0003677">
    <property type="term" value="F:DNA binding"/>
    <property type="evidence" value="ECO:0007669"/>
    <property type="project" value="UniProtKB-KW"/>
</dbReference>
<dbReference type="GO" id="GO:0006260">
    <property type="term" value="P:DNA replication"/>
    <property type="evidence" value="ECO:0007669"/>
    <property type="project" value="InterPro"/>
</dbReference>
<dbReference type="GO" id="GO:0000725">
    <property type="term" value="P:recombinational repair"/>
    <property type="evidence" value="ECO:0007669"/>
    <property type="project" value="TreeGrafter"/>
</dbReference>
<dbReference type="CDD" id="cd17932">
    <property type="entry name" value="DEXQc_UvrD"/>
    <property type="match status" value="1"/>
</dbReference>
<dbReference type="CDD" id="cd18807">
    <property type="entry name" value="SF1_C_UvrD"/>
    <property type="match status" value="1"/>
</dbReference>
<dbReference type="FunFam" id="1.10.10.160:FF:000001">
    <property type="entry name" value="ATP-dependent DNA helicase"/>
    <property type="match status" value="1"/>
</dbReference>
<dbReference type="FunFam" id="1.10.486.10:FF:000003">
    <property type="entry name" value="ATP-dependent DNA helicase"/>
    <property type="match status" value="1"/>
</dbReference>
<dbReference type="FunFam" id="3.40.50.300:FF:001201">
    <property type="entry name" value="ATP-dependent DNA helicase UvrD2"/>
    <property type="match status" value="1"/>
</dbReference>
<dbReference type="Gene3D" id="1.10.10.160">
    <property type="match status" value="1"/>
</dbReference>
<dbReference type="Gene3D" id="3.40.50.300">
    <property type="entry name" value="P-loop containing nucleotide triphosphate hydrolases"/>
    <property type="match status" value="2"/>
</dbReference>
<dbReference type="Gene3D" id="1.10.486.10">
    <property type="entry name" value="PCRA, domain 4"/>
    <property type="match status" value="1"/>
</dbReference>
<dbReference type="InterPro" id="IPR005751">
    <property type="entry name" value="ATP-dep_DNA_helicase_PcrA"/>
</dbReference>
<dbReference type="InterPro" id="IPR013986">
    <property type="entry name" value="DExx_box_DNA_helicase_dom_sf"/>
</dbReference>
<dbReference type="InterPro" id="IPR014017">
    <property type="entry name" value="DNA_helicase_UvrD-like_C"/>
</dbReference>
<dbReference type="InterPro" id="IPR000212">
    <property type="entry name" value="DNA_helicase_UvrD/REP"/>
</dbReference>
<dbReference type="InterPro" id="IPR027417">
    <property type="entry name" value="P-loop_NTPase"/>
</dbReference>
<dbReference type="InterPro" id="IPR014016">
    <property type="entry name" value="UvrD-like_ATP-bd"/>
</dbReference>
<dbReference type="NCBIfam" id="TIGR01073">
    <property type="entry name" value="pcrA"/>
    <property type="match status" value="1"/>
</dbReference>
<dbReference type="PANTHER" id="PTHR11070:SF2">
    <property type="entry name" value="ATP-DEPENDENT DNA HELICASE SRS2"/>
    <property type="match status" value="1"/>
</dbReference>
<dbReference type="PANTHER" id="PTHR11070">
    <property type="entry name" value="UVRD / RECB / PCRA DNA HELICASE FAMILY MEMBER"/>
    <property type="match status" value="1"/>
</dbReference>
<dbReference type="Pfam" id="PF21196">
    <property type="entry name" value="PcrA_UvrD_tudor"/>
    <property type="match status" value="1"/>
</dbReference>
<dbReference type="Pfam" id="PF00580">
    <property type="entry name" value="UvrD-helicase"/>
    <property type="match status" value="1"/>
</dbReference>
<dbReference type="Pfam" id="PF13361">
    <property type="entry name" value="UvrD_C"/>
    <property type="match status" value="1"/>
</dbReference>
<dbReference type="SUPFAM" id="SSF52540">
    <property type="entry name" value="P-loop containing nucleoside triphosphate hydrolases"/>
    <property type="match status" value="1"/>
</dbReference>
<dbReference type="PROSITE" id="PS51198">
    <property type="entry name" value="UVRD_HELICASE_ATP_BIND"/>
    <property type="match status" value="1"/>
</dbReference>
<dbReference type="PROSITE" id="PS51217">
    <property type="entry name" value="UVRD_HELICASE_CTER"/>
    <property type="match status" value="1"/>
</dbReference>
<gene>
    <name type="primary">pcrA</name>
</gene>